<name>RK23_ANTAG</name>
<organism>
    <name type="scientific">Anthoceros angustus</name>
    <name type="common">Hornwort</name>
    <name type="synonym">Anthoceros formosae</name>
    <dbReference type="NCBI Taxonomy" id="48387"/>
    <lineage>
        <taxon>Eukaryota</taxon>
        <taxon>Viridiplantae</taxon>
        <taxon>Streptophyta</taxon>
        <taxon>Embryophyta</taxon>
        <taxon>Anthocerotophyta</taxon>
        <taxon>Anthocerotopsida</taxon>
        <taxon>Anthocerotidae</taxon>
        <taxon>Anthocerotales</taxon>
        <taxon>Anthocerotaceae</taxon>
        <taxon>Anthoceros</taxon>
    </lineage>
</organism>
<proteinExistence type="evidence at transcript level"/>
<keyword id="KW-0150">Chloroplast</keyword>
<keyword id="KW-0934">Plastid</keyword>
<keyword id="KW-0687">Ribonucleoprotein</keyword>
<keyword id="KW-0689">Ribosomal protein</keyword>
<keyword id="KW-0691">RNA editing</keyword>
<keyword id="KW-0694">RNA-binding</keyword>
<keyword id="KW-0699">rRNA-binding</keyword>
<geneLocation type="chloroplast"/>
<dbReference type="EMBL" id="AB086179">
    <property type="protein sequence ID" value="BAC55392.1"/>
    <property type="molecule type" value="Genomic_DNA"/>
</dbReference>
<dbReference type="EMBL" id="AB087474">
    <property type="protein sequence ID" value="BAC55493.1"/>
    <property type="molecule type" value="mRNA"/>
</dbReference>
<dbReference type="RefSeq" id="NP_777456.1">
    <property type="nucleotide sequence ID" value="NC_004543.1"/>
</dbReference>
<dbReference type="SMR" id="Q85BJ7"/>
<dbReference type="GeneID" id="2553418"/>
<dbReference type="GO" id="GO:0009507">
    <property type="term" value="C:chloroplast"/>
    <property type="evidence" value="ECO:0007669"/>
    <property type="project" value="UniProtKB-SubCell"/>
</dbReference>
<dbReference type="GO" id="GO:1990904">
    <property type="term" value="C:ribonucleoprotein complex"/>
    <property type="evidence" value="ECO:0007669"/>
    <property type="project" value="UniProtKB-KW"/>
</dbReference>
<dbReference type="GO" id="GO:0005840">
    <property type="term" value="C:ribosome"/>
    <property type="evidence" value="ECO:0007669"/>
    <property type="project" value="UniProtKB-KW"/>
</dbReference>
<dbReference type="GO" id="GO:0019843">
    <property type="term" value="F:rRNA binding"/>
    <property type="evidence" value="ECO:0007669"/>
    <property type="project" value="UniProtKB-UniRule"/>
</dbReference>
<dbReference type="GO" id="GO:0003735">
    <property type="term" value="F:structural constituent of ribosome"/>
    <property type="evidence" value="ECO:0007669"/>
    <property type="project" value="InterPro"/>
</dbReference>
<dbReference type="GO" id="GO:0006412">
    <property type="term" value="P:translation"/>
    <property type="evidence" value="ECO:0007669"/>
    <property type="project" value="UniProtKB-UniRule"/>
</dbReference>
<dbReference type="Gene3D" id="3.30.70.330">
    <property type="match status" value="1"/>
</dbReference>
<dbReference type="HAMAP" id="MF_01369_B">
    <property type="entry name" value="Ribosomal_uL23_B"/>
    <property type="match status" value="1"/>
</dbReference>
<dbReference type="InterPro" id="IPR012677">
    <property type="entry name" value="Nucleotide-bd_a/b_plait_sf"/>
</dbReference>
<dbReference type="InterPro" id="IPR013025">
    <property type="entry name" value="Ribosomal_uL23-like"/>
</dbReference>
<dbReference type="InterPro" id="IPR012678">
    <property type="entry name" value="Ribosomal_uL23/eL15/eS24_sf"/>
</dbReference>
<dbReference type="InterPro" id="IPR001014">
    <property type="entry name" value="Ribosomal_uL23_CS"/>
</dbReference>
<dbReference type="PANTHER" id="PTHR11620">
    <property type="entry name" value="60S RIBOSOMAL PROTEIN L23A"/>
    <property type="match status" value="1"/>
</dbReference>
<dbReference type="Pfam" id="PF00276">
    <property type="entry name" value="Ribosomal_L23"/>
    <property type="match status" value="1"/>
</dbReference>
<dbReference type="SUPFAM" id="SSF54189">
    <property type="entry name" value="Ribosomal proteins S24e, L23 and L15e"/>
    <property type="match status" value="1"/>
</dbReference>
<dbReference type="PROSITE" id="PS00050">
    <property type="entry name" value="RIBOSOMAL_L23"/>
    <property type="match status" value="1"/>
</dbReference>
<reference key="1">
    <citation type="journal article" date="2003" name="Nucleic Acids Res.">
        <title>The complete nucleotide sequence of the hornwort (Anthoceros formosae) chloroplast genome: insight into the earliest land plants.</title>
        <authorList>
            <person name="Kugita M."/>
            <person name="Kaneko A."/>
            <person name="Yamamoto Y."/>
            <person name="Takeya Y."/>
            <person name="Matsumoto T."/>
            <person name="Yoshinaga K."/>
        </authorList>
    </citation>
    <scope>NUCLEOTIDE SEQUENCE [LARGE SCALE GENOMIC DNA]</scope>
    <scope>RNA EDITING</scope>
</reference>
<reference key="2">
    <citation type="journal article" date="2003" name="Nucleic Acids Res.">
        <title>RNA editing in hornwort chloroplasts makes more than half the genes functional.</title>
        <authorList>
            <person name="Kugita M."/>
            <person name="Yamamoto Y."/>
            <person name="Fujikawa T."/>
            <person name="Matsumoto T."/>
            <person name="Yoshinaga K."/>
        </authorList>
    </citation>
    <scope>NUCLEOTIDE SEQUENCE [MRNA]</scope>
    <scope>RNA EDITING</scope>
    <source>
        <tissue>Thallus</tissue>
    </source>
</reference>
<gene>
    <name type="primary">rpl23</name>
</gene>
<sequence>MDKVKYPVLTEKTIRLLERNQYCFDVDLKASKTEIKQWIQDFFKVKVVAMNSHRPPKKKKRIGPVLGYPVRYKRMIITLESNYSIPLFLNK</sequence>
<protein>
    <recommendedName>
        <fullName evidence="4">Large ribosomal subunit protein uL23c</fullName>
    </recommendedName>
    <alternativeName>
        <fullName>50S ribosomal protein L23, chloroplastic</fullName>
    </alternativeName>
</protein>
<comment type="function">
    <text evidence="1">Binds to 23S rRNA.</text>
</comment>
<comment type="subunit">
    <text evidence="1">Part of the 50S ribosomal subunit.</text>
</comment>
<comment type="subcellular location">
    <subcellularLocation>
        <location>Plastid</location>
        <location>Chloroplast</location>
    </subcellularLocation>
</comment>
<comment type="RNA editing">
    <location>
        <position position="21" evidence="2 3"/>
    </location>
    <location>
        <position position="43" evidence="2 3"/>
    </location>
    <text>The nonsense codon in position 21 is modified to a sense codon.</text>
</comment>
<comment type="similarity">
    <text evidence="4">Belongs to the universal ribosomal protein uL23 family.</text>
</comment>
<evidence type="ECO:0000250" key="1"/>
<evidence type="ECO:0000269" key="2">
    <source>
    </source>
</evidence>
<evidence type="ECO:0000269" key="3">
    <source>
    </source>
</evidence>
<evidence type="ECO:0000305" key="4"/>
<accession>Q85BJ7</accession>
<feature type="chain" id="PRO_0000129443" description="Large ribosomal subunit protein uL23c">
    <location>
        <begin position="1"/>
        <end position="91"/>
    </location>
</feature>